<comment type="function">
    <text evidence="1">Pyrophosphatase that catalyzes the hydrolysis of nucleoside triphosphates to their monophosphate derivatives, with a high preference for the non-canonical purine nucleotides XTP (xanthosine triphosphate), dITP (deoxyinosine triphosphate) and ITP. Seems to function as a house-cleaning enzyme that removes non-canonical purine nucleotides from the nucleotide pool, thus preventing their incorporation into DNA/RNA and avoiding chromosomal lesions.</text>
</comment>
<comment type="catalytic activity">
    <reaction evidence="1">
        <text>XTP + H2O = XMP + diphosphate + H(+)</text>
        <dbReference type="Rhea" id="RHEA:28610"/>
        <dbReference type="ChEBI" id="CHEBI:15377"/>
        <dbReference type="ChEBI" id="CHEBI:15378"/>
        <dbReference type="ChEBI" id="CHEBI:33019"/>
        <dbReference type="ChEBI" id="CHEBI:57464"/>
        <dbReference type="ChEBI" id="CHEBI:61314"/>
        <dbReference type="EC" id="3.6.1.66"/>
    </reaction>
</comment>
<comment type="catalytic activity">
    <reaction evidence="1">
        <text>dITP + H2O = dIMP + diphosphate + H(+)</text>
        <dbReference type="Rhea" id="RHEA:28342"/>
        <dbReference type="ChEBI" id="CHEBI:15377"/>
        <dbReference type="ChEBI" id="CHEBI:15378"/>
        <dbReference type="ChEBI" id="CHEBI:33019"/>
        <dbReference type="ChEBI" id="CHEBI:61194"/>
        <dbReference type="ChEBI" id="CHEBI:61382"/>
        <dbReference type="EC" id="3.6.1.66"/>
    </reaction>
</comment>
<comment type="catalytic activity">
    <reaction evidence="1">
        <text>ITP + H2O = IMP + diphosphate + H(+)</text>
        <dbReference type="Rhea" id="RHEA:29399"/>
        <dbReference type="ChEBI" id="CHEBI:15377"/>
        <dbReference type="ChEBI" id="CHEBI:15378"/>
        <dbReference type="ChEBI" id="CHEBI:33019"/>
        <dbReference type="ChEBI" id="CHEBI:58053"/>
        <dbReference type="ChEBI" id="CHEBI:61402"/>
        <dbReference type="EC" id="3.6.1.66"/>
    </reaction>
</comment>
<comment type="cofactor">
    <cofactor evidence="1">
        <name>Mg(2+)</name>
        <dbReference type="ChEBI" id="CHEBI:18420"/>
    </cofactor>
    <text evidence="1">Binds 1 Mg(2+) ion per subunit.</text>
</comment>
<comment type="subunit">
    <text evidence="1">Homodimer.</text>
</comment>
<comment type="similarity">
    <text evidence="1">Belongs to the HAM1 NTPase family.</text>
</comment>
<name>IXTPA_CAMJD</name>
<protein>
    <recommendedName>
        <fullName evidence="1">dITP/XTP pyrophosphatase</fullName>
        <ecNumber evidence="1">3.6.1.66</ecNumber>
    </recommendedName>
    <alternativeName>
        <fullName evidence="1">Non-canonical purine NTP pyrophosphatase</fullName>
    </alternativeName>
    <alternativeName>
        <fullName evidence="1">Non-standard purine NTP pyrophosphatase</fullName>
    </alternativeName>
    <alternativeName>
        <fullName evidence="1">Nucleoside-triphosphate diphosphatase</fullName>
    </alternativeName>
    <alternativeName>
        <fullName evidence="1">Nucleoside-triphosphate pyrophosphatase</fullName>
        <shortName evidence="1">NTPase</shortName>
    </alternativeName>
</protein>
<accession>A7H1W5</accession>
<proteinExistence type="inferred from homology"/>
<feature type="chain" id="PRO_1000068413" description="dITP/XTP pyrophosphatase">
    <location>
        <begin position="1"/>
        <end position="200"/>
    </location>
</feature>
<feature type="active site" description="Proton acceptor" evidence="1">
    <location>
        <position position="73"/>
    </location>
</feature>
<feature type="binding site" evidence="1">
    <location>
        <begin position="7"/>
        <end position="12"/>
    </location>
    <ligand>
        <name>substrate</name>
    </ligand>
</feature>
<feature type="binding site" evidence="1">
    <location>
        <position position="38"/>
    </location>
    <ligand>
        <name>Mg(2+)</name>
        <dbReference type="ChEBI" id="CHEBI:18420"/>
    </ligand>
</feature>
<feature type="binding site" evidence="1">
    <location>
        <position position="73"/>
    </location>
    <ligand>
        <name>Mg(2+)</name>
        <dbReference type="ChEBI" id="CHEBI:18420"/>
    </ligand>
</feature>
<feature type="binding site" evidence="1">
    <location>
        <position position="74"/>
    </location>
    <ligand>
        <name>substrate</name>
    </ligand>
</feature>
<feature type="binding site" evidence="1">
    <location>
        <begin position="154"/>
        <end position="157"/>
    </location>
    <ligand>
        <name>substrate</name>
    </ligand>
</feature>
<feature type="binding site" evidence="1">
    <location>
        <position position="177"/>
    </location>
    <ligand>
        <name>substrate</name>
    </ligand>
</feature>
<feature type="binding site" evidence="1">
    <location>
        <begin position="182"/>
        <end position="183"/>
    </location>
    <ligand>
        <name>substrate</name>
    </ligand>
</feature>
<dbReference type="EC" id="3.6.1.66" evidence="1"/>
<dbReference type="EMBL" id="CP000768">
    <property type="protein sequence ID" value="ABS43590.1"/>
    <property type="molecule type" value="Genomic_DNA"/>
</dbReference>
<dbReference type="SMR" id="A7H1W5"/>
<dbReference type="KEGG" id="cjd:JJD26997_0276"/>
<dbReference type="HOGENOM" id="CLU_082080_0_2_7"/>
<dbReference type="Proteomes" id="UP000002302">
    <property type="component" value="Chromosome"/>
</dbReference>
<dbReference type="GO" id="GO:0005829">
    <property type="term" value="C:cytosol"/>
    <property type="evidence" value="ECO:0007669"/>
    <property type="project" value="TreeGrafter"/>
</dbReference>
<dbReference type="GO" id="GO:0035870">
    <property type="term" value="F:dITP diphosphatase activity"/>
    <property type="evidence" value="ECO:0007669"/>
    <property type="project" value="RHEA"/>
</dbReference>
<dbReference type="GO" id="GO:0036220">
    <property type="term" value="F:ITP diphosphatase activity"/>
    <property type="evidence" value="ECO:0007669"/>
    <property type="project" value="UniProtKB-EC"/>
</dbReference>
<dbReference type="GO" id="GO:0046872">
    <property type="term" value="F:metal ion binding"/>
    <property type="evidence" value="ECO:0007669"/>
    <property type="project" value="UniProtKB-KW"/>
</dbReference>
<dbReference type="GO" id="GO:0000166">
    <property type="term" value="F:nucleotide binding"/>
    <property type="evidence" value="ECO:0007669"/>
    <property type="project" value="UniProtKB-KW"/>
</dbReference>
<dbReference type="GO" id="GO:0017111">
    <property type="term" value="F:ribonucleoside triphosphate phosphatase activity"/>
    <property type="evidence" value="ECO:0007669"/>
    <property type="project" value="InterPro"/>
</dbReference>
<dbReference type="GO" id="GO:0036222">
    <property type="term" value="F:XTP diphosphatase activity"/>
    <property type="evidence" value="ECO:0007669"/>
    <property type="project" value="RHEA"/>
</dbReference>
<dbReference type="GO" id="GO:0009117">
    <property type="term" value="P:nucleotide metabolic process"/>
    <property type="evidence" value="ECO:0007669"/>
    <property type="project" value="UniProtKB-KW"/>
</dbReference>
<dbReference type="GO" id="GO:0009146">
    <property type="term" value="P:purine nucleoside triphosphate catabolic process"/>
    <property type="evidence" value="ECO:0007669"/>
    <property type="project" value="UniProtKB-UniRule"/>
</dbReference>
<dbReference type="CDD" id="cd00515">
    <property type="entry name" value="HAM1"/>
    <property type="match status" value="1"/>
</dbReference>
<dbReference type="FunFam" id="3.90.950.10:FF:000001">
    <property type="entry name" value="dITP/XTP pyrophosphatase"/>
    <property type="match status" value="1"/>
</dbReference>
<dbReference type="Gene3D" id="3.90.950.10">
    <property type="match status" value="1"/>
</dbReference>
<dbReference type="HAMAP" id="MF_01405">
    <property type="entry name" value="Non_canon_purine_NTPase"/>
    <property type="match status" value="1"/>
</dbReference>
<dbReference type="InterPro" id="IPR020922">
    <property type="entry name" value="dITP/XTP_pyrophosphatase"/>
</dbReference>
<dbReference type="InterPro" id="IPR029001">
    <property type="entry name" value="ITPase-like_fam"/>
</dbReference>
<dbReference type="InterPro" id="IPR002637">
    <property type="entry name" value="RdgB/HAM1"/>
</dbReference>
<dbReference type="NCBIfam" id="TIGR00042">
    <property type="entry name" value="RdgB/HAM1 family non-canonical purine NTP pyrophosphatase"/>
    <property type="match status" value="1"/>
</dbReference>
<dbReference type="PANTHER" id="PTHR11067:SF9">
    <property type="entry name" value="INOSINE TRIPHOSPHATE PYROPHOSPHATASE"/>
    <property type="match status" value="1"/>
</dbReference>
<dbReference type="PANTHER" id="PTHR11067">
    <property type="entry name" value="INOSINE TRIPHOSPHATE PYROPHOSPHATASE/HAM1 PROTEIN"/>
    <property type="match status" value="1"/>
</dbReference>
<dbReference type="Pfam" id="PF01725">
    <property type="entry name" value="Ham1p_like"/>
    <property type="match status" value="1"/>
</dbReference>
<dbReference type="SUPFAM" id="SSF52972">
    <property type="entry name" value="ITPase-like"/>
    <property type="match status" value="1"/>
</dbReference>
<evidence type="ECO:0000255" key="1">
    <source>
        <dbReference type="HAMAP-Rule" id="MF_01405"/>
    </source>
</evidence>
<gene>
    <name type="ordered locus">JJD26997_0276</name>
</gene>
<reference key="1">
    <citation type="submission" date="2007-07" db="EMBL/GenBank/DDBJ databases">
        <title>Complete genome sequence of Campylobacter jejuni subsp doylei 269.97 isolated from human blood.</title>
        <authorList>
            <person name="Fouts D.E."/>
            <person name="Mongodin E.F."/>
            <person name="Puiu D."/>
            <person name="Sebastian Y."/>
            <person name="Miller W.G."/>
            <person name="Mandrell R.E."/>
            <person name="Lastovica A.J."/>
            <person name="Nelson K.E."/>
        </authorList>
    </citation>
    <scope>NUCLEOTIDE SEQUENCE [LARGE SCALE GENOMIC DNA]</scope>
    <source>
        <strain>ATCC BAA-1458 / RM4099 / 269.97</strain>
    </source>
</reference>
<sequence>MKIILATSNKHKVLELKEILKDFEIYAFDEVLTPFEIEENGKTFKENALIKARAVFNALDEKQKKDFIALSDDSGICVDVLEGNPGIYSARFSGKGDDKSNRDKLVNEMIKKGFNQSRAHYVAAIAMVGLMGEFSTHGTMYGKVIDTEKGENGFGYDSLFIPKGFDKTLAQLSVDEKNNISHRFKALELAKIILKILTKG</sequence>
<keyword id="KW-0378">Hydrolase</keyword>
<keyword id="KW-0460">Magnesium</keyword>
<keyword id="KW-0479">Metal-binding</keyword>
<keyword id="KW-0546">Nucleotide metabolism</keyword>
<keyword id="KW-0547">Nucleotide-binding</keyword>
<organism>
    <name type="scientific">Campylobacter jejuni subsp. doylei (strain ATCC BAA-1458 / RM4099 / 269.97)</name>
    <dbReference type="NCBI Taxonomy" id="360109"/>
    <lineage>
        <taxon>Bacteria</taxon>
        <taxon>Pseudomonadati</taxon>
        <taxon>Campylobacterota</taxon>
        <taxon>Epsilonproteobacteria</taxon>
        <taxon>Campylobacterales</taxon>
        <taxon>Campylobacteraceae</taxon>
        <taxon>Campylobacter</taxon>
    </lineage>
</organism>